<gene>
    <name evidence="1" type="primary">petG</name>
</gene>
<proteinExistence type="inferred from homology"/>
<geneLocation type="chloroplast"/>
<evidence type="ECO:0000255" key="1">
    <source>
        <dbReference type="HAMAP-Rule" id="MF_00432"/>
    </source>
</evidence>
<comment type="function">
    <text evidence="1">Component of the cytochrome b6-f complex, which mediates electron transfer between photosystem II (PSII) and photosystem I (PSI), cyclic electron flow around PSI, and state transitions. PetG is required for either the stability or assembly of the cytochrome b6-f complex.</text>
</comment>
<comment type="subunit">
    <text evidence="1">The 4 large subunits of the cytochrome b6-f complex are cytochrome b6, subunit IV (17 kDa polypeptide, PetD), cytochrome f and the Rieske protein, while the 4 small subunits are PetG, PetL, PetM and PetN. The complex functions as a dimer.</text>
</comment>
<comment type="subcellular location">
    <subcellularLocation>
        <location evidence="1">Plastid</location>
        <location evidence="1">Chloroplast thylakoid membrane</location>
        <topology evidence="1">Single-pass membrane protein</topology>
    </subcellularLocation>
</comment>
<comment type="similarity">
    <text evidence="1">Belongs to the PetG family.</text>
</comment>
<organism>
    <name type="scientific">Pyropia yezoensis</name>
    <name type="common">Susabi-nori</name>
    <name type="synonym">Porphyra yezoensis</name>
    <dbReference type="NCBI Taxonomy" id="2788"/>
    <lineage>
        <taxon>Eukaryota</taxon>
        <taxon>Rhodophyta</taxon>
        <taxon>Bangiophyceae</taxon>
        <taxon>Bangiales</taxon>
        <taxon>Bangiaceae</taxon>
        <taxon>Pyropia</taxon>
    </lineage>
</organism>
<reference key="1">
    <citation type="submission" date="2003-11" db="EMBL/GenBank/DDBJ databases">
        <title>Whole genome sequence of Porphyra yezoensis chloroplast.</title>
        <authorList>
            <person name="Kunimoto M."/>
            <person name="Morishima K."/>
            <person name="Yoshikawa M."/>
            <person name="Fukuda S."/>
            <person name="Kobayashi T."/>
            <person name="Kobayashi M."/>
            <person name="Okazaki T."/>
            <person name="Ohara I."/>
            <person name="Nakayama I."/>
        </authorList>
    </citation>
    <scope>NUCLEOTIDE SEQUENCE [LARGE SCALE GENOMIC DNA]</scope>
    <source>
        <strain>U-51</strain>
    </source>
</reference>
<name>PETG_PYRYE</name>
<dbReference type="EMBL" id="AP006715">
    <property type="protein sequence ID" value="BAE92442.1"/>
    <property type="molecule type" value="Genomic_DNA"/>
</dbReference>
<dbReference type="RefSeq" id="YP_536999.1">
    <property type="nucleotide sequence ID" value="NC_007932.1"/>
</dbReference>
<dbReference type="SMR" id="Q1XDG9"/>
<dbReference type="GeneID" id="3978942"/>
<dbReference type="GO" id="GO:0009535">
    <property type="term" value="C:chloroplast thylakoid membrane"/>
    <property type="evidence" value="ECO:0007669"/>
    <property type="project" value="UniProtKB-SubCell"/>
</dbReference>
<dbReference type="GO" id="GO:0009512">
    <property type="term" value="C:cytochrome b6f complex"/>
    <property type="evidence" value="ECO:0007669"/>
    <property type="project" value="InterPro"/>
</dbReference>
<dbReference type="GO" id="GO:0045158">
    <property type="term" value="F:electron transporter, transferring electrons within cytochrome b6/f complex of photosystem II activity"/>
    <property type="evidence" value="ECO:0007669"/>
    <property type="project" value="UniProtKB-UniRule"/>
</dbReference>
<dbReference type="GO" id="GO:0017004">
    <property type="term" value="P:cytochrome complex assembly"/>
    <property type="evidence" value="ECO:0007669"/>
    <property type="project" value="UniProtKB-UniRule"/>
</dbReference>
<dbReference type="GO" id="GO:0015979">
    <property type="term" value="P:photosynthesis"/>
    <property type="evidence" value="ECO:0007669"/>
    <property type="project" value="UniProtKB-KW"/>
</dbReference>
<dbReference type="HAMAP" id="MF_00432">
    <property type="entry name" value="Cytb6_f_PetG"/>
    <property type="match status" value="1"/>
</dbReference>
<dbReference type="InterPro" id="IPR003683">
    <property type="entry name" value="Cyt_6/f_cplx_su5"/>
</dbReference>
<dbReference type="InterPro" id="IPR036099">
    <property type="entry name" value="Cyt_6/f_cplx_su5_sf"/>
</dbReference>
<dbReference type="NCBIfam" id="NF001907">
    <property type="entry name" value="PRK00665.1"/>
    <property type="match status" value="1"/>
</dbReference>
<dbReference type="Pfam" id="PF02529">
    <property type="entry name" value="PetG"/>
    <property type="match status" value="1"/>
</dbReference>
<dbReference type="PIRSF" id="PIRSF000034">
    <property type="entry name" value="Cyt_b6-f_V"/>
    <property type="match status" value="1"/>
</dbReference>
<dbReference type="SUPFAM" id="SSF103446">
    <property type="entry name" value="PetG subunit of the cytochrome b6f complex"/>
    <property type="match status" value="1"/>
</dbReference>
<keyword id="KW-0150">Chloroplast</keyword>
<keyword id="KW-0249">Electron transport</keyword>
<keyword id="KW-0472">Membrane</keyword>
<keyword id="KW-0602">Photosynthesis</keyword>
<keyword id="KW-0934">Plastid</keyword>
<keyword id="KW-0793">Thylakoid</keyword>
<keyword id="KW-0812">Transmembrane</keyword>
<keyword id="KW-1133">Transmembrane helix</keyword>
<keyword id="KW-0813">Transport</keyword>
<sequence>MVEPLLSGIVLGLIPITLFGLLVAAYLQYQRGNQLGL</sequence>
<accession>Q1XDG9</accession>
<protein>
    <recommendedName>
        <fullName evidence="1">Cytochrome b6-f complex subunit 5</fullName>
    </recommendedName>
    <alternativeName>
        <fullName evidence="1">Cytochrome b6-f complex subunit PetG</fullName>
    </alternativeName>
    <alternativeName>
        <fullName evidence="1">Cytochrome b6-f complex subunit V</fullName>
    </alternativeName>
</protein>
<feature type="chain" id="PRO_0000275515" description="Cytochrome b6-f complex subunit 5">
    <location>
        <begin position="1"/>
        <end position="37"/>
    </location>
</feature>
<feature type="transmembrane region" description="Helical" evidence="1">
    <location>
        <begin position="5"/>
        <end position="25"/>
    </location>
</feature>